<accession>P07795</accession>
<protein>
    <recommendedName>
        <fullName>Late histone H2B.2.2</fullName>
    </recommendedName>
</protein>
<comment type="function">
    <text>Core component of nucleosome. Nucleosomes wrap and compact DNA into chromatin, limiting DNA accessibility to the cellular machineries which require DNA as a template. Histones thereby play a central role in transcription regulation, DNA repair, DNA replication and chromosomal stability. DNA accessibility is regulated via a complex set of post-translational modifications of histones, also called histone code, and nucleosome remodeling.</text>
</comment>
<comment type="subunit">
    <text>The nucleosome is a histone octamer containing two molecules each of H2A, H2B, H3 and H4 assembled in one H3-H4 heterotetramer and two H2A-H2B heterodimers. The octamer wraps approximately 147 bp of DNA.</text>
</comment>
<comment type="subcellular location">
    <subcellularLocation>
        <location>Nucleus</location>
    </subcellularLocation>
    <subcellularLocation>
        <location>Chromosome</location>
    </subcellularLocation>
</comment>
<comment type="PTM">
    <text evidence="1">Monoubiquitination of Lys-119 gives a specific tag for epigenetic transcriptional activation and is also prerequisite for histone H3 'Lys-4' and 'Lys-79' methylation.</text>
</comment>
<comment type="PTM">
    <text evidence="1">GlcNAcylation at Ser-111 promotes monoubiquitination of Lys-119. It fluctuates in response to extracellular glucose, and associates with transcribed genes (By similarity).</text>
</comment>
<comment type="similarity">
    <text evidence="3">Belongs to the histone H2B family.</text>
</comment>
<proteinExistence type="inferred from homology"/>
<name>H2BL2_PSAMI</name>
<dbReference type="EMBL" id="M14143">
    <property type="protein sequence ID" value="AAA30013.1"/>
    <property type="molecule type" value="Genomic_DNA"/>
</dbReference>
<dbReference type="SMR" id="P07795"/>
<dbReference type="GO" id="GO:0000786">
    <property type="term" value="C:nucleosome"/>
    <property type="evidence" value="ECO:0007669"/>
    <property type="project" value="UniProtKB-KW"/>
</dbReference>
<dbReference type="GO" id="GO:0005634">
    <property type="term" value="C:nucleus"/>
    <property type="evidence" value="ECO:0007669"/>
    <property type="project" value="UniProtKB-SubCell"/>
</dbReference>
<dbReference type="GO" id="GO:0003677">
    <property type="term" value="F:DNA binding"/>
    <property type="evidence" value="ECO:0007669"/>
    <property type="project" value="UniProtKB-KW"/>
</dbReference>
<dbReference type="GO" id="GO:0046982">
    <property type="term" value="F:protein heterodimerization activity"/>
    <property type="evidence" value="ECO:0007669"/>
    <property type="project" value="InterPro"/>
</dbReference>
<dbReference type="GO" id="GO:0044877">
    <property type="term" value="F:protein-containing complex binding"/>
    <property type="evidence" value="ECO:0000250"/>
    <property type="project" value="UniProtKB"/>
</dbReference>
<dbReference type="GO" id="GO:0030527">
    <property type="term" value="F:structural constituent of chromatin"/>
    <property type="evidence" value="ECO:0007669"/>
    <property type="project" value="InterPro"/>
</dbReference>
<dbReference type="CDD" id="cd22910">
    <property type="entry name" value="HFD_H2B"/>
    <property type="match status" value="1"/>
</dbReference>
<dbReference type="FunFam" id="1.10.20.10:FF:000016">
    <property type="entry name" value="Histone H2B"/>
    <property type="match status" value="1"/>
</dbReference>
<dbReference type="Gene3D" id="1.10.20.10">
    <property type="entry name" value="Histone, subunit A"/>
    <property type="match status" value="1"/>
</dbReference>
<dbReference type="InterPro" id="IPR009072">
    <property type="entry name" value="Histone-fold"/>
</dbReference>
<dbReference type="InterPro" id="IPR007125">
    <property type="entry name" value="Histone_H2A/H2B/H3"/>
</dbReference>
<dbReference type="InterPro" id="IPR000558">
    <property type="entry name" value="Histone_H2B"/>
</dbReference>
<dbReference type="InterPro" id="IPR055333">
    <property type="entry name" value="HISTONE_H2B_site"/>
</dbReference>
<dbReference type="PANTHER" id="PTHR23428">
    <property type="entry name" value="HISTONE H2B"/>
    <property type="match status" value="1"/>
</dbReference>
<dbReference type="Pfam" id="PF00125">
    <property type="entry name" value="Histone"/>
    <property type="match status" value="1"/>
</dbReference>
<dbReference type="PRINTS" id="PR00621">
    <property type="entry name" value="HISTONEH2B"/>
</dbReference>
<dbReference type="SMART" id="SM00427">
    <property type="entry name" value="H2B"/>
    <property type="match status" value="1"/>
</dbReference>
<dbReference type="SUPFAM" id="SSF47113">
    <property type="entry name" value="Histone-fold"/>
    <property type="match status" value="1"/>
</dbReference>
<dbReference type="PROSITE" id="PS00357">
    <property type="entry name" value="HISTONE_H2B"/>
    <property type="match status" value="1"/>
</dbReference>
<sequence>MPAKQTSGKGAKKAGKAKGRPSGASKTRRRKRKESYGIYIYKVLKQVHPDTGISSKAMSIMNSFVNDVFERIAGEASRLSQYNKKSTISSREVQTAVRLLLPGELAKHAVSEGTKAVTKYTTSK</sequence>
<feature type="initiator methionine" description="Removed" evidence="1">
    <location>
        <position position="1"/>
    </location>
</feature>
<feature type="chain" id="PRO_0000071894" description="Late histone H2B.2.2">
    <location>
        <begin position="2"/>
        <end position="124"/>
    </location>
</feature>
<feature type="region of interest" description="Disordered" evidence="2">
    <location>
        <begin position="1"/>
        <end position="32"/>
    </location>
</feature>
<feature type="compositionally biased region" description="Basic residues" evidence="2">
    <location>
        <begin position="10"/>
        <end position="19"/>
    </location>
</feature>
<feature type="glycosylation site" description="O-linked (GlcNAc) serine" evidence="1">
    <location>
        <position position="111"/>
    </location>
</feature>
<feature type="cross-link" description="Glycyl lysine isopeptide (Lys-Gly) (interchain with G-Cter in ubiquitin)" evidence="1">
    <location>
        <position position="119"/>
    </location>
</feature>
<reference key="1">
    <citation type="journal article" date="1986" name="Mol. Cell. Biol.">
        <title>Characterization of two nonallelic pairs of late histone H2A and H2B genes of the sea urchin: differential regulation in the embryo and tissue-specific expression in the adult.</title>
        <authorList>
            <person name="Kemler I."/>
            <person name="Busslinger M."/>
        </authorList>
    </citation>
    <scope>NUCLEOTIDE SEQUENCE [GENOMIC DNA]</scope>
</reference>
<evidence type="ECO:0000250" key="1"/>
<evidence type="ECO:0000256" key="2">
    <source>
        <dbReference type="SAM" id="MobiDB-lite"/>
    </source>
</evidence>
<evidence type="ECO:0000305" key="3"/>
<organism>
    <name type="scientific">Psammechinus miliaris</name>
    <name type="common">Green sea urchin</name>
    <name type="synonym">Echinus miliaris</name>
    <dbReference type="NCBI Taxonomy" id="7660"/>
    <lineage>
        <taxon>Eukaryota</taxon>
        <taxon>Metazoa</taxon>
        <taxon>Echinodermata</taxon>
        <taxon>Eleutherozoa</taxon>
        <taxon>Echinozoa</taxon>
        <taxon>Echinoidea</taxon>
        <taxon>Euechinoidea</taxon>
        <taxon>Echinacea</taxon>
        <taxon>Camarodonta</taxon>
        <taxon>Echinidea</taxon>
        <taxon>Parechinidae</taxon>
        <taxon>Psammechinus</taxon>
    </lineage>
</organism>
<keyword id="KW-0158">Chromosome</keyword>
<keyword id="KW-0238">DNA-binding</keyword>
<keyword id="KW-0325">Glycoprotein</keyword>
<keyword id="KW-1017">Isopeptide bond</keyword>
<keyword id="KW-0544">Nucleosome core</keyword>
<keyword id="KW-0539">Nucleus</keyword>
<keyword id="KW-0832">Ubl conjugation</keyword>